<keyword id="KW-1283">Bacterial microcompartment</keyword>
<keyword id="KW-0113">Calvin cycle</keyword>
<keyword id="KW-0120">Carbon dioxide fixation</keyword>
<keyword id="KW-1282">Carboxysome</keyword>
<organism>
    <name type="scientific">Hydrogenovibrio crunogenus (strain DSM 25203 / XCL-2)</name>
    <name type="common">Thiomicrospira crunogena</name>
    <dbReference type="NCBI Taxonomy" id="317025"/>
    <lineage>
        <taxon>Bacteria</taxon>
        <taxon>Pseudomonadati</taxon>
        <taxon>Pseudomonadota</taxon>
        <taxon>Gammaproteobacteria</taxon>
        <taxon>Thiotrichales</taxon>
        <taxon>Piscirickettsiaceae</taxon>
        <taxon>Hydrogenovibrio</taxon>
    </lineage>
</organism>
<sequence>MSISQIDDYRTQYTLETFSFLPELTADEIYDQIVYIINQGWSPALEHEEPAKASDHYWGMWKLPMFGTRDPNEVLAEIDACRQAYPNHLIRLVGYDNYTQCQGHNFVVYRPRGM</sequence>
<feature type="chain" id="PRO_0000452047" description="Ribulose bisphosphate carboxylase small subunit 2">
    <location>
        <begin position="1"/>
        <end position="114"/>
    </location>
</feature>
<evidence type="ECO:0000250" key="1">
    <source>
        <dbReference type="UniProtKB" id="P45686"/>
    </source>
</evidence>
<evidence type="ECO:0000255" key="2">
    <source>
        <dbReference type="HAMAP-Rule" id="MF_00859"/>
    </source>
</evidence>
<evidence type="ECO:0000269" key="3">
    <source>
    </source>
</evidence>
<evidence type="ECO:0000269" key="4">
    <source>
    </source>
</evidence>
<evidence type="ECO:0000269" key="5">
    <source>
    </source>
</evidence>
<evidence type="ECO:0000269" key="6">
    <source>
    </source>
</evidence>
<evidence type="ECO:0000303" key="7">
    <source>
    </source>
</evidence>
<evidence type="ECO:0000305" key="8"/>
<evidence type="ECO:0000305" key="9">
    <source>
    </source>
</evidence>
<evidence type="ECO:0000305" key="10">
    <source>
    </source>
</evidence>
<accession>Q31HD8</accession>
<dbReference type="EMBL" id="CP000109">
    <property type="protein sequence ID" value="ABB41435.1"/>
    <property type="molecule type" value="Genomic_DNA"/>
</dbReference>
<dbReference type="SMR" id="Q31HD8"/>
<dbReference type="STRING" id="317025.Tcr_0839"/>
<dbReference type="KEGG" id="tcx:Tcr_0839"/>
<dbReference type="eggNOG" id="COG4451">
    <property type="taxonomic scope" value="Bacteria"/>
</dbReference>
<dbReference type="HOGENOM" id="CLU_098114_2_0_6"/>
<dbReference type="OrthoDB" id="9788955at2"/>
<dbReference type="GO" id="GO:0031470">
    <property type="term" value="C:carboxysome"/>
    <property type="evidence" value="ECO:0007669"/>
    <property type="project" value="UniProtKB-SubCell"/>
</dbReference>
<dbReference type="GO" id="GO:0016984">
    <property type="term" value="F:ribulose-bisphosphate carboxylase activity"/>
    <property type="evidence" value="ECO:0007669"/>
    <property type="project" value="UniProtKB-UniRule"/>
</dbReference>
<dbReference type="GO" id="GO:0019253">
    <property type="term" value="P:reductive pentose-phosphate cycle"/>
    <property type="evidence" value="ECO:0007669"/>
    <property type="project" value="UniProtKB-UniRule"/>
</dbReference>
<dbReference type="CDD" id="cd03527">
    <property type="entry name" value="RuBisCO_small"/>
    <property type="match status" value="1"/>
</dbReference>
<dbReference type="Gene3D" id="3.30.190.10">
    <property type="entry name" value="Ribulose bisphosphate carboxylase, small subunit"/>
    <property type="match status" value="1"/>
</dbReference>
<dbReference type="HAMAP" id="MF_00859">
    <property type="entry name" value="RuBisCO_S_bact"/>
    <property type="match status" value="1"/>
</dbReference>
<dbReference type="InterPro" id="IPR024681">
    <property type="entry name" value="RuBisCO_ssu"/>
</dbReference>
<dbReference type="InterPro" id="IPR000894">
    <property type="entry name" value="RuBisCO_ssu_dom"/>
</dbReference>
<dbReference type="InterPro" id="IPR036385">
    <property type="entry name" value="RuBisCO_ssu_sf"/>
</dbReference>
<dbReference type="PANTHER" id="PTHR31262">
    <property type="entry name" value="RIBULOSE BISPHOSPHATE CARBOXYLASE SMALL CHAIN 1, CHLOROPLASTIC"/>
    <property type="match status" value="1"/>
</dbReference>
<dbReference type="Pfam" id="PF00101">
    <property type="entry name" value="RuBisCO_small"/>
    <property type="match status" value="1"/>
</dbReference>
<dbReference type="SMART" id="SM00961">
    <property type="entry name" value="RuBisCO_small"/>
    <property type="match status" value="1"/>
</dbReference>
<dbReference type="SUPFAM" id="SSF55239">
    <property type="entry name" value="RuBisCO, small subunit"/>
    <property type="match status" value="1"/>
</dbReference>
<protein>
    <recommendedName>
        <fullName evidence="2">Ribulose bisphosphate carboxylase small subunit 2</fullName>
        <shortName evidence="2">RuBisCO small subunit 2</shortName>
    </recommendedName>
    <alternativeName>
        <fullName evidence="7">Carboxysomal form I RuBisCO small subunit</fullName>
    </alternativeName>
</protein>
<comment type="function">
    <text evidence="10">RuBisCO catalyzes two reactions: the carboxylation of D-ribulose 1,5-bisphosphate, the primary event in carbon dioxide fixation, as well as the oxidative fragmentation of the pentose substrate. Both reactions occur simultaneously and in competition at the same active site (Probable). Although the small subunit is not catalytic it is essential for maximal activity.</text>
</comment>
<comment type="function">
    <text evidence="4">Replacing the endogenous type I ccbLS genes in H.neapolitanus with this carboxysomally targeted enzyme reconstitutes RuBisCO with about 25% of normal activity; the active enzyme is targeted to carboxysomes (PubMed:18974784).</text>
</comment>
<comment type="biophysicochemical properties">
    <kinetics>
        <KM evidence="5">276 uM for CO(2)</KM>
        <Vmax evidence="5">252.0 nmol/min/mg enzyme</Vmax>
        <text evidence="5">kcat is 0.27 sec(-1) for holoenzyme.</text>
    </kinetics>
    <phDependence>
        <text evidence="5">Optimum pH is 8.0.</text>
    </phDependence>
</comment>
<comment type="subunit">
    <text evidence="1 2">Heterohexadecamer of 8 large and 8 small subunits. Forms a CsoS2-CsoS1-RuBisCO complex.</text>
</comment>
<comment type="subcellular location">
    <subcellularLocation>
        <location evidence="5 9 10">Carboxysome</location>
    </subcellularLocation>
    <text evidence="8">This bacterium makes alpha-type carboxysomes.</text>
</comment>
<comment type="induction">
    <text evidence="6">Induced by growth in low levels of dissolved inorganic carbon (at protein level).</text>
</comment>
<comment type="miscellaneous">
    <text evidence="3">Encoded in a cso-type operon.</text>
</comment>
<comment type="miscellaneous">
    <text evidence="2">The basic functional RuBisCO is composed of a large chain homodimer in a 'head-to-tail' conformation. In form I RuBisCO this homodimer is arranged in a barrel-like tetramer with the small subunits forming a tetrameric 'cap' on each end of the 'barrel'.</text>
</comment>
<comment type="similarity">
    <text evidence="2">Belongs to the RuBisCO small chain family.</text>
</comment>
<gene>
    <name evidence="2" type="primary">cbbS2</name>
    <name type="ordered locus">Tcr_0839</name>
</gene>
<proteinExistence type="evidence at protein level"/>
<reference key="1">
    <citation type="journal article" date="2006" name="PLoS Biol.">
        <title>The genome of deep-sea vent chemolithoautotroph Thiomicrospira crunogena XCL-2.</title>
        <authorList>
            <person name="Scott K.M."/>
            <person name="Sievert S.M."/>
            <person name="Abril F.N."/>
            <person name="Ball L.A."/>
            <person name="Barrett C.J."/>
            <person name="Blake R.A."/>
            <person name="Boller A.J."/>
            <person name="Chain P.S.G."/>
            <person name="Clark J.A."/>
            <person name="Davis C.R."/>
            <person name="Detter C."/>
            <person name="Do K.F."/>
            <person name="Dobrinski K.P."/>
            <person name="Faza B.I."/>
            <person name="Fitzpatrick K.A."/>
            <person name="Freyermuth S.K."/>
            <person name="Harmer T.L."/>
            <person name="Hauser L.J."/>
            <person name="Huegler M."/>
            <person name="Kerfeld C.A."/>
            <person name="Klotz M.G."/>
            <person name="Kong W.W."/>
            <person name="Land M."/>
            <person name="Lapidus A."/>
            <person name="Larimer F.W."/>
            <person name="Longo D.L."/>
            <person name="Lucas S."/>
            <person name="Malfatti S.A."/>
            <person name="Massey S.E."/>
            <person name="Martin D.D."/>
            <person name="McCuddin Z."/>
            <person name="Meyer F."/>
            <person name="Moore J.L."/>
            <person name="Ocampo L.H. Jr."/>
            <person name="Paul J.H."/>
            <person name="Paulsen I.T."/>
            <person name="Reep D.K."/>
            <person name="Ren Q."/>
            <person name="Ross R.L."/>
            <person name="Sato P.Y."/>
            <person name="Thomas P."/>
            <person name="Tinkham L.E."/>
            <person name="Zeruth G.T."/>
        </authorList>
    </citation>
    <scope>NUCLEOTIDE SEQUENCE [LARGE SCALE GENOMIC DNA]</scope>
    <source>
        <strain>DSM 25203 / XCL-2</strain>
    </source>
</reference>
<reference key="2">
    <citation type="journal article" date="2008" name="PLoS ONE">
        <title>Halothiobacillus neapolitanus carboxysomes sequester heterologous and chimeric RubisCO species.</title>
        <authorList>
            <person name="Menon B.B."/>
            <person name="Dou Z."/>
            <person name="Heinhorst S."/>
            <person name="Shively J.M."/>
            <person name="Cannon G.C."/>
        </authorList>
    </citation>
    <scope>FUNCTION</scope>
    <scope>SUBCELLULAR LOCATION</scope>
    <source>
        <strain>DSM 25203 / XCL-2</strain>
    </source>
</reference>
<reference key="3">
    <citation type="journal article" date="2016" name="Arch. Microbiol.">
        <title>Dissolved inorganic carbon uptake in Thiomicrospira crunogena XCL-2 is Deltap- and ATP-sensitive and enhances RubisCO-mediated carbon fixation.</title>
        <authorList>
            <consortium name="USF MCB4404L 2012"/>
            <person name="Menning K.J."/>
            <person name="Menon B.B."/>
            <person name="Fox G."/>
            <person name="Scott K.M."/>
        </authorList>
    </citation>
    <scope>BIOPHYSICOCHEMICAL PROPERTIES</scope>
    <scope>SUBCELLULAR LOCATION</scope>
    <source>
        <strain>DSM 25203 / XCL-2</strain>
    </source>
</reference>
<reference key="4">
    <citation type="journal article" date="2017" name="J. Bacteriol.">
        <title>Proteomic and Mutant Analysis of the CO2 Concentrating Mechanism of Hydrothermal Vent Chemolithoautotroph Thiomicrospira crunogena.</title>
        <authorList>
            <consortium name="USF MCB4404L"/>
            <person name="Mangiapia M."/>
            <person name="Brown T.W."/>
            <person name="Chaput D."/>
            <person name="Haller E."/>
            <person name="Harmer T.L."/>
            <person name="Hashemy Z."/>
            <person name="Keeley R."/>
            <person name="Leonard J."/>
            <person name="Mancera P."/>
            <person name="Nicholson D."/>
            <person name="Stevens S."/>
            <person name="Wanjugi P."/>
            <person name="Zabinski T."/>
            <person name="Pan C."/>
            <person name="Scott K.M."/>
        </authorList>
    </citation>
    <scope>INDUCTION</scope>
</reference>
<name>RBS2_HYDCU</name>